<name>Y666_STAES</name>
<proteinExistence type="inferred from homology"/>
<reference key="1">
    <citation type="journal article" date="2003" name="Mol. Microbiol.">
        <title>Genome-based analysis of virulence genes in a non-biofilm-forming Staphylococcus epidermidis strain (ATCC 12228).</title>
        <authorList>
            <person name="Zhang Y.-Q."/>
            <person name="Ren S.-X."/>
            <person name="Li H.-L."/>
            <person name="Wang Y.-X."/>
            <person name="Fu G."/>
            <person name="Yang J."/>
            <person name="Qin Z.-Q."/>
            <person name="Miao Y.-G."/>
            <person name="Wang W.-Y."/>
            <person name="Chen R.-S."/>
            <person name="Shen Y."/>
            <person name="Chen Z."/>
            <person name="Yuan Z.-H."/>
            <person name="Zhao G.-P."/>
            <person name="Qu D."/>
            <person name="Danchin A."/>
            <person name="Wen Y.-M."/>
        </authorList>
    </citation>
    <scope>NUCLEOTIDE SEQUENCE [LARGE SCALE GENOMIC DNA]</scope>
    <source>
        <strain>ATCC 12228 / FDA PCI 1200</strain>
    </source>
</reference>
<comment type="subcellular location">
    <subcellularLocation>
        <location evidence="1">Cell membrane</location>
        <topology evidence="1">Multi-pass membrane protein</topology>
    </subcellularLocation>
</comment>
<comment type="similarity">
    <text evidence="1">Belongs to the UPF0344 family.</text>
</comment>
<gene>
    <name type="ordered locus">SE_0666</name>
</gene>
<feature type="chain" id="PRO_0000105899" description="UPF0344 protein SE_0666">
    <location>
        <begin position="1"/>
        <end position="133"/>
    </location>
</feature>
<feature type="transmembrane region" description="Helical" evidence="1">
    <location>
        <begin position="1"/>
        <end position="21"/>
    </location>
</feature>
<feature type="transmembrane region" description="Helical" evidence="1">
    <location>
        <begin position="42"/>
        <end position="62"/>
    </location>
</feature>
<feature type="transmembrane region" description="Helical" evidence="1">
    <location>
        <begin position="71"/>
        <end position="91"/>
    </location>
</feature>
<feature type="transmembrane region" description="Helical" evidence="1">
    <location>
        <begin position="103"/>
        <end position="123"/>
    </location>
</feature>
<dbReference type="EMBL" id="AE015929">
    <property type="protein sequence ID" value="AAO04263.1"/>
    <property type="molecule type" value="Genomic_DNA"/>
</dbReference>
<dbReference type="RefSeq" id="NP_764221.1">
    <property type="nucleotide sequence ID" value="NC_004461.1"/>
</dbReference>
<dbReference type="RefSeq" id="WP_001831989.1">
    <property type="nucleotide sequence ID" value="NZ_WBME01000043.1"/>
</dbReference>
<dbReference type="SMR" id="Q8CT77"/>
<dbReference type="DNASU" id="1055826"/>
<dbReference type="KEGG" id="sep:SE_0666"/>
<dbReference type="PATRIC" id="fig|176280.10.peg.639"/>
<dbReference type="eggNOG" id="ENOG5033A1U">
    <property type="taxonomic scope" value="Bacteria"/>
</dbReference>
<dbReference type="HOGENOM" id="CLU_146641_2_0_9"/>
<dbReference type="OrthoDB" id="2365314at2"/>
<dbReference type="Proteomes" id="UP000001411">
    <property type="component" value="Chromosome"/>
</dbReference>
<dbReference type="GO" id="GO:0005886">
    <property type="term" value="C:plasma membrane"/>
    <property type="evidence" value="ECO:0007669"/>
    <property type="project" value="UniProtKB-SubCell"/>
</dbReference>
<dbReference type="HAMAP" id="MF_01536">
    <property type="entry name" value="UPF0344"/>
    <property type="match status" value="1"/>
</dbReference>
<dbReference type="InterPro" id="IPR010899">
    <property type="entry name" value="UPF0344"/>
</dbReference>
<dbReference type="NCBIfam" id="NF010195">
    <property type="entry name" value="PRK13673.1-2"/>
    <property type="match status" value="1"/>
</dbReference>
<dbReference type="NCBIfam" id="NF010199">
    <property type="entry name" value="PRK13673.1-6"/>
    <property type="match status" value="1"/>
</dbReference>
<dbReference type="Pfam" id="PF07457">
    <property type="entry name" value="DUF1516"/>
    <property type="match status" value="1"/>
</dbReference>
<keyword id="KW-1003">Cell membrane</keyword>
<keyword id="KW-0472">Membrane</keyword>
<keyword id="KW-0812">Transmembrane</keyword>
<keyword id="KW-1133">Transmembrane helix</keyword>
<evidence type="ECO:0000255" key="1">
    <source>
        <dbReference type="HAMAP-Rule" id="MF_01536"/>
    </source>
</evidence>
<protein>
    <recommendedName>
        <fullName evidence="1">UPF0344 protein SE_0666</fullName>
    </recommendedName>
</protein>
<accession>Q8CT77</accession>
<sequence length="133" mass="15055">MLHVHILSWVLAIILFIATYLNYSKTQGASPYYKPLHMALRLFMLLTLISGFWELIEEFMAASNGEGGNHMLLTLKMLCGLAVIAFMEISIAKRKKQQTSHKFFWITIILIIITMAIGVILPWGPISKIFGIS</sequence>
<organism>
    <name type="scientific">Staphylococcus epidermidis (strain ATCC 12228 / FDA PCI 1200)</name>
    <dbReference type="NCBI Taxonomy" id="176280"/>
    <lineage>
        <taxon>Bacteria</taxon>
        <taxon>Bacillati</taxon>
        <taxon>Bacillota</taxon>
        <taxon>Bacilli</taxon>
        <taxon>Bacillales</taxon>
        <taxon>Staphylococcaceae</taxon>
        <taxon>Staphylococcus</taxon>
    </lineage>
</organism>